<keyword id="KW-0997">Cell inner membrane</keyword>
<keyword id="KW-1003">Cell membrane</keyword>
<keyword id="KW-0143">Chaperone</keyword>
<keyword id="KW-0472">Membrane</keyword>
<keyword id="KW-0653">Protein transport</keyword>
<keyword id="KW-1185">Reference proteome</keyword>
<keyword id="KW-0812">Transmembrane</keyword>
<keyword id="KW-1133">Transmembrane helix</keyword>
<keyword id="KW-0813">Transport</keyword>
<sequence length="560" mass="61920">MDIKRTILIAALAVVSYVMVLKWNDDYGQAALPTQNTAASTVAPGLPDGVPAGNNGASADVPSANAESSPAELAPVALSKDLIRVKTDVLELAIDPVGGDIVQLNLPKYPRRQDHPNIPFQLFDNGGERVYLAQSGLTGTDGPDARASGRPLYAAEQKSYQLADGQEQLVVDLKFSDNGVNYIKRFSFKRGEYDLNVSYLIDNQSGQAWNGNMFAQLKRDASGDPSSSTATGTATYLGAALWTASEPYKKVSMKDIDKGSLKENVSGGWVAWLQHYFVTAWIPAKSDNNVVQTRKDSQGNYIIGYTGPVISVPAGGKVETSALLYAGPKIQSKLKELSPGLELTVDYGFLWFIAQPIFWLLQHIHSLLGNWGWSIIVLTMLIKGLFFPLSAASYRSMARMRAVAPKLAALKERFGDDRQKMSQAMMELYKKEKINPLGGCLPILVQMPVFLALYWVLLESVEMRQAPWILWITDLSIKDPFFILPIIMGATMFIQQRLNPTPPDPMQAKVMKMMPIIFTFFFLWFPAGLVLYWVVNNCLSISQQWYITRRIEAATKKAAA</sequence>
<comment type="function">
    <text evidence="1">Required for the insertion and/or proper folding and/or complex formation of integral membrane proteins into the membrane. Involved in integration of membrane proteins that insert both dependently and independently of the Sec translocase complex, as well as at least some lipoproteins. Aids folding of multispanning membrane proteins.</text>
</comment>
<comment type="subunit">
    <text evidence="1">Interacts with the Sec translocase complex via SecD. Specifically interacts with transmembrane segments of nascent integral membrane proteins during membrane integration.</text>
</comment>
<comment type="subcellular location">
    <subcellularLocation>
        <location evidence="1">Cell inner membrane</location>
        <topology evidence="1">Multi-pass membrane protein</topology>
    </subcellularLocation>
</comment>
<comment type="similarity">
    <text evidence="1">Belongs to the OXA1/ALB3/YidC family. Type 1 subfamily.</text>
</comment>
<accession>P0A140</accession>
<accession>P25754</accession>
<reference key="1">
    <citation type="journal article" date="2002" name="Environ. Microbiol.">
        <title>Complete genome sequence and comparative analysis of the metabolically versatile Pseudomonas putida KT2440.</title>
        <authorList>
            <person name="Nelson K.E."/>
            <person name="Weinel C."/>
            <person name="Paulsen I.T."/>
            <person name="Dodson R.J."/>
            <person name="Hilbert H."/>
            <person name="Martins dos Santos V.A.P."/>
            <person name="Fouts D.E."/>
            <person name="Gill S.R."/>
            <person name="Pop M."/>
            <person name="Holmes M."/>
            <person name="Brinkac L.M."/>
            <person name="Beanan M.J."/>
            <person name="DeBoy R.T."/>
            <person name="Daugherty S.C."/>
            <person name="Kolonay J.F."/>
            <person name="Madupu R."/>
            <person name="Nelson W.C."/>
            <person name="White O."/>
            <person name="Peterson J.D."/>
            <person name="Khouri H.M."/>
            <person name="Hance I."/>
            <person name="Chris Lee P."/>
            <person name="Holtzapple E.K."/>
            <person name="Scanlan D."/>
            <person name="Tran K."/>
            <person name="Moazzez A."/>
            <person name="Utterback T.R."/>
            <person name="Rizzo M."/>
            <person name="Lee K."/>
            <person name="Kosack D."/>
            <person name="Moestl D."/>
            <person name="Wedler H."/>
            <person name="Lauber J."/>
            <person name="Stjepandic D."/>
            <person name="Hoheisel J."/>
            <person name="Straetz M."/>
            <person name="Heim S."/>
            <person name="Kiewitz C."/>
            <person name="Eisen J.A."/>
            <person name="Timmis K.N."/>
            <person name="Duesterhoeft A."/>
            <person name="Tuemmler B."/>
            <person name="Fraser C.M."/>
        </authorList>
    </citation>
    <scope>NUCLEOTIDE SEQUENCE [LARGE SCALE GENOMIC DNA]</scope>
    <source>
        <strain>ATCC 47054 / DSM 6125 / CFBP 8728 / NCIMB 11950 / KT2440</strain>
    </source>
</reference>
<organism>
    <name type="scientific">Pseudomonas putida (strain ATCC 47054 / DSM 6125 / CFBP 8728 / NCIMB 11950 / KT2440)</name>
    <dbReference type="NCBI Taxonomy" id="160488"/>
    <lineage>
        <taxon>Bacteria</taxon>
        <taxon>Pseudomonadati</taxon>
        <taxon>Pseudomonadota</taxon>
        <taxon>Gammaproteobacteria</taxon>
        <taxon>Pseudomonadales</taxon>
        <taxon>Pseudomonadaceae</taxon>
        <taxon>Pseudomonas</taxon>
    </lineage>
</organism>
<name>YIDC_PSEPK</name>
<dbReference type="EMBL" id="AE015451">
    <property type="protein sequence ID" value="AAN65640.1"/>
    <property type="molecule type" value="Genomic_DNA"/>
</dbReference>
<dbReference type="RefSeq" id="NP_742176.1">
    <property type="nucleotide sequence ID" value="NC_002947.4"/>
</dbReference>
<dbReference type="RefSeq" id="WP_010951425.1">
    <property type="nucleotide sequence ID" value="NZ_CP169744.1"/>
</dbReference>
<dbReference type="SMR" id="P0A140"/>
<dbReference type="STRING" id="160488.PP_0006"/>
<dbReference type="PaxDb" id="160488-PP_0006"/>
<dbReference type="GeneID" id="83683239"/>
<dbReference type="KEGG" id="ppu:PP_0006"/>
<dbReference type="PATRIC" id="fig|160488.4.peg.6"/>
<dbReference type="eggNOG" id="COG0706">
    <property type="taxonomic scope" value="Bacteria"/>
</dbReference>
<dbReference type="HOGENOM" id="CLU_016535_3_0_6"/>
<dbReference type="OrthoDB" id="9780552at2"/>
<dbReference type="PhylomeDB" id="P0A140"/>
<dbReference type="BioCyc" id="PPUT160488:G1G01-6-MONOMER"/>
<dbReference type="Proteomes" id="UP000000556">
    <property type="component" value="Chromosome"/>
</dbReference>
<dbReference type="GO" id="GO:0005886">
    <property type="term" value="C:plasma membrane"/>
    <property type="evidence" value="ECO:0007669"/>
    <property type="project" value="UniProtKB-SubCell"/>
</dbReference>
<dbReference type="GO" id="GO:0032977">
    <property type="term" value="F:membrane insertase activity"/>
    <property type="evidence" value="ECO:0007669"/>
    <property type="project" value="InterPro"/>
</dbReference>
<dbReference type="GO" id="GO:0051205">
    <property type="term" value="P:protein insertion into membrane"/>
    <property type="evidence" value="ECO:0007669"/>
    <property type="project" value="TreeGrafter"/>
</dbReference>
<dbReference type="GO" id="GO:0015031">
    <property type="term" value="P:protein transport"/>
    <property type="evidence" value="ECO:0007669"/>
    <property type="project" value="UniProtKB-KW"/>
</dbReference>
<dbReference type="CDD" id="cd20070">
    <property type="entry name" value="5TM_YidC_Alb3"/>
    <property type="match status" value="1"/>
</dbReference>
<dbReference type="CDD" id="cd19961">
    <property type="entry name" value="EcYidC-like_peri"/>
    <property type="match status" value="1"/>
</dbReference>
<dbReference type="Gene3D" id="2.70.98.90">
    <property type="match status" value="1"/>
</dbReference>
<dbReference type="HAMAP" id="MF_01810">
    <property type="entry name" value="YidC_type1"/>
    <property type="match status" value="1"/>
</dbReference>
<dbReference type="InterPro" id="IPR019998">
    <property type="entry name" value="Membr_insert_YidC"/>
</dbReference>
<dbReference type="InterPro" id="IPR028053">
    <property type="entry name" value="Membr_insert_YidC_N"/>
</dbReference>
<dbReference type="InterPro" id="IPR001708">
    <property type="entry name" value="YidC/ALB3/OXA1/COX18"/>
</dbReference>
<dbReference type="InterPro" id="IPR028055">
    <property type="entry name" value="YidC/Oxa/ALB_C"/>
</dbReference>
<dbReference type="InterPro" id="IPR047196">
    <property type="entry name" value="YidC_ALB_C"/>
</dbReference>
<dbReference type="InterPro" id="IPR038221">
    <property type="entry name" value="YidC_periplasmic_sf"/>
</dbReference>
<dbReference type="NCBIfam" id="NF002352">
    <property type="entry name" value="PRK01318.1-3"/>
    <property type="match status" value="1"/>
</dbReference>
<dbReference type="NCBIfam" id="NF002353">
    <property type="entry name" value="PRK01318.1-4"/>
    <property type="match status" value="1"/>
</dbReference>
<dbReference type="NCBIfam" id="TIGR03593">
    <property type="entry name" value="yidC_nterm"/>
    <property type="match status" value="1"/>
</dbReference>
<dbReference type="NCBIfam" id="TIGR03592">
    <property type="entry name" value="yidC_oxa1_cterm"/>
    <property type="match status" value="1"/>
</dbReference>
<dbReference type="PANTHER" id="PTHR12428:SF65">
    <property type="entry name" value="CYTOCHROME C OXIDASE ASSEMBLY PROTEIN COX18, MITOCHONDRIAL"/>
    <property type="match status" value="1"/>
</dbReference>
<dbReference type="PANTHER" id="PTHR12428">
    <property type="entry name" value="OXA1"/>
    <property type="match status" value="1"/>
</dbReference>
<dbReference type="Pfam" id="PF02096">
    <property type="entry name" value="60KD_IMP"/>
    <property type="match status" value="1"/>
</dbReference>
<dbReference type="Pfam" id="PF14849">
    <property type="entry name" value="YidC_periplas"/>
    <property type="match status" value="1"/>
</dbReference>
<dbReference type="PRINTS" id="PR00701">
    <property type="entry name" value="60KDINNERMP"/>
</dbReference>
<dbReference type="PRINTS" id="PR01900">
    <property type="entry name" value="YIDCPROTEIN"/>
</dbReference>
<proteinExistence type="inferred from homology"/>
<feature type="chain" id="PRO_0000124742" description="Membrane protein insertase YidC">
    <location>
        <begin position="1"/>
        <end position="560"/>
    </location>
</feature>
<feature type="transmembrane region" description="Helical" evidence="1">
    <location>
        <begin position="1"/>
        <end position="21"/>
    </location>
</feature>
<feature type="transmembrane region" description="Helical" evidence="1">
    <location>
        <begin position="341"/>
        <end position="361"/>
    </location>
</feature>
<feature type="transmembrane region" description="Helical" evidence="1">
    <location>
        <begin position="367"/>
        <end position="387"/>
    </location>
</feature>
<feature type="transmembrane region" description="Helical" evidence="1">
    <location>
        <begin position="437"/>
        <end position="457"/>
    </location>
</feature>
<feature type="transmembrane region" description="Helical" evidence="1">
    <location>
        <begin position="468"/>
        <end position="488"/>
    </location>
</feature>
<feature type="transmembrane region" description="Helical" evidence="1">
    <location>
        <begin position="515"/>
        <end position="535"/>
    </location>
</feature>
<feature type="region of interest" description="Disordered" evidence="2">
    <location>
        <begin position="42"/>
        <end position="66"/>
    </location>
</feature>
<protein>
    <recommendedName>
        <fullName evidence="1">Membrane protein insertase YidC</fullName>
    </recommendedName>
    <alternativeName>
        <fullName evidence="1">Foldase YidC</fullName>
    </alternativeName>
    <alternativeName>
        <fullName evidence="1">Membrane integrase YidC</fullName>
    </alternativeName>
    <alternativeName>
        <fullName evidence="1">Membrane protein YidC</fullName>
    </alternativeName>
</protein>
<evidence type="ECO:0000255" key="1">
    <source>
        <dbReference type="HAMAP-Rule" id="MF_01810"/>
    </source>
</evidence>
<evidence type="ECO:0000256" key="2">
    <source>
        <dbReference type="SAM" id="MobiDB-lite"/>
    </source>
</evidence>
<gene>
    <name evidence="1" type="primary">yidC</name>
    <name type="ordered locus">PP_0006</name>
</gene>